<evidence type="ECO:0000255" key="1">
    <source>
        <dbReference type="HAMAP-Rule" id="MF_00537"/>
    </source>
</evidence>
<evidence type="ECO:0000305" key="2"/>
<organism>
    <name type="scientific">Rhodomonas salina</name>
    <name type="common">Cryptomonas salina</name>
    <dbReference type="NCBI Taxonomy" id="52970"/>
    <lineage>
        <taxon>Eukaryota</taxon>
        <taxon>Cryptophyceae</taxon>
        <taxon>Pyrenomonadales</taxon>
        <taxon>Pyrenomonadaceae</taxon>
        <taxon>Rhodomonas</taxon>
    </lineage>
</organism>
<geneLocation type="chloroplast"/>
<gene>
    <name evidence="1" type="primary">rps14</name>
</gene>
<proteinExistence type="inferred from homology"/>
<accession>A6MVZ5</accession>
<reference key="1">
    <citation type="journal article" date="2007" name="Mol. Biol. Evol.">
        <title>Plastid genome sequence of the cryptophyte alga Rhodomonas salina CCMP1319: lateral transfer of putative DNA replication machinery and a test of chromist plastid phylogeny.</title>
        <authorList>
            <person name="Khan H."/>
            <person name="Parks N."/>
            <person name="Kozera C."/>
            <person name="Curtis B.A."/>
            <person name="Parsons B.J."/>
            <person name="Bowman S."/>
            <person name="Archibald J.M."/>
        </authorList>
    </citation>
    <scope>NUCLEOTIDE SEQUENCE [LARGE SCALE GENOMIC DNA]</scope>
    <source>
        <strain>CCMP1319 / NEPCC76 / CS-174</strain>
    </source>
</reference>
<dbReference type="EMBL" id="EF508371">
    <property type="protein sequence ID" value="ABO70804.1"/>
    <property type="molecule type" value="Genomic_DNA"/>
</dbReference>
<dbReference type="RefSeq" id="YP_001293574.1">
    <property type="nucleotide sequence ID" value="NC_009573.1"/>
</dbReference>
<dbReference type="SMR" id="A6MVZ5"/>
<dbReference type="GeneID" id="5228575"/>
<dbReference type="GO" id="GO:0009507">
    <property type="term" value="C:chloroplast"/>
    <property type="evidence" value="ECO:0007669"/>
    <property type="project" value="UniProtKB-SubCell"/>
</dbReference>
<dbReference type="GO" id="GO:0015935">
    <property type="term" value="C:small ribosomal subunit"/>
    <property type="evidence" value="ECO:0007669"/>
    <property type="project" value="TreeGrafter"/>
</dbReference>
<dbReference type="GO" id="GO:0019843">
    <property type="term" value="F:rRNA binding"/>
    <property type="evidence" value="ECO:0007669"/>
    <property type="project" value="UniProtKB-UniRule"/>
</dbReference>
<dbReference type="GO" id="GO:0003735">
    <property type="term" value="F:structural constituent of ribosome"/>
    <property type="evidence" value="ECO:0007669"/>
    <property type="project" value="InterPro"/>
</dbReference>
<dbReference type="GO" id="GO:0006412">
    <property type="term" value="P:translation"/>
    <property type="evidence" value="ECO:0007669"/>
    <property type="project" value="UniProtKB-UniRule"/>
</dbReference>
<dbReference type="FunFam" id="1.10.287.1480:FF:000001">
    <property type="entry name" value="30S ribosomal protein S14"/>
    <property type="match status" value="1"/>
</dbReference>
<dbReference type="Gene3D" id="1.10.287.1480">
    <property type="match status" value="1"/>
</dbReference>
<dbReference type="HAMAP" id="MF_00537">
    <property type="entry name" value="Ribosomal_uS14_1"/>
    <property type="match status" value="1"/>
</dbReference>
<dbReference type="InterPro" id="IPR001209">
    <property type="entry name" value="Ribosomal_uS14"/>
</dbReference>
<dbReference type="InterPro" id="IPR023036">
    <property type="entry name" value="Ribosomal_uS14_bac/plastid"/>
</dbReference>
<dbReference type="InterPro" id="IPR018271">
    <property type="entry name" value="Ribosomal_uS14_CS"/>
</dbReference>
<dbReference type="NCBIfam" id="NF006477">
    <property type="entry name" value="PRK08881.1"/>
    <property type="match status" value="1"/>
</dbReference>
<dbReference type="PANTHER" id="PTHR19836">
    <property type="entry name" value="30S RIBOSOMAL PROTEIN S14"/>
    <property type="match status" value="1"/>
</dbReference>
<dbReference type="PANTHER" id="PTHR19836:SF19">
    <property type="entry name" value="SMALL RIBOSOMAL SUBUNIT PROTEIN US14M"/>
    <property type="match status" value="1"/>
</dbReference>
<dbReference type="Pfam" id="PF00253">
    <property type="entry name" value="Ribosomal_S14"/>
    <property type="match status" value="1"/>
</dbReference>
<dbReference type="SUPFAM" id="SSF57716">
    <property type="entry name" value="Glucocorticoid receptor-like (DNA-binding domain)"/>
    <property type="match status" value="1"/>
</dbReference>
<dbReference type="PROSITE" id="PS00527">
    <property type="entry name" value="RIBOSOMAL_S14"/>
    <property type="match status" value="1"/>
</dbReference>
<comment type="function">
    <text evidence="1">Binds 16S rRNA, required for the assembly of 30S particles.</text>
</comment>
<comment type="subunit">
    <text evidence="1">Part of the 30S ribosomal subunit.</text>
</comment>
<comment type="subcellular location">
    <subcellularLocation>
        <location>Plastid</location>
        <location>Chloroplast</location>
    </subcellularLocation>
</comment>
<comment type="similarity">
    <text evidence="1">Belongs to the universal ribosomal protein uS14 family.</text>
</comment>
<sequence>MAKKSMIQREKKRERLVAKYGKKRDEIKKALKSVTSYKDRLDLYAKLEKLPRNSFPSRLRNRCWLTGRTRGYYRQFGLSRHVLREMAHQCLLPGVVKSSW</sequence>
<keyword id="KW-0150">Chloroplast</keyword>
<keyword id="KW-0934">Plastid</keyword>
<keyword id="KW-0687">Ribonucleoprotein</keyword>
<keyword id="KW-0689">Ribosomal protein</keyword>
<keyword id="KW-0694">RNA-binding</keyword>
<keyword id="KW-0699">rRNA-binding</keyword>
<name>RR14_RHDSA</name>
<protein>
    <recommendedName>
        <fullName evidence="1">Small ribosomal subunit protein uS14c</fullName>
    </recommendedName>
    <alternativeName>
        <fullName evidence="2">30S ribosomal protein S14, chloroplastic</fullName>
    </alternativeName>
</protein>
<feature type="chain" id="PRO_0000354439" description="Small ribosomal subunit protein uS14c">
    <location>
        <begin position="1"/>
        <end position="100"/>
    </location>
</feature>